<keyword id="KW-0002">3D-structure</keyword>
<keyword id="KW-0238">DNA-binding</keyword>
<keyword id="KW-0539">Nucleus</keyword>
<keyword id="KW-1185">Reference proteome</keyword>
<keyword id="KW-0804">Transcription</keyword>
<keyword id="KW-0805">Transcription regulation</keyword>
<comment type="function">
    <text evidence="3">Transcription factors that bind specifically to the 5'-CATGTG-3' motif.</text>
</comment>
<comment type="subunit">
    <text evidence="2">Dimer. Interacts with RHA2A, RHA2B or RHG1A, but not with RHA3A or RHA3B.</text>
</comment>
<comment type="interaction">
    <interactant intactId="EBI-1786615">
        <id>Q9C932</id>
    </interactant>
    <interactant intactId="EBI-2025293">
        <id>Q9ZT50</id>
        <label>RHA2A</label>
    </interactant>
    <organismsDiffer>false</organismsDiffer>
    <experiments>3</experiments>
</comment>
<comment type="subcellular location">
    <subcellularLocation>
        <location evidence="1 2">Nucleus</location>
    </subcellularLocation>
</comment>
<comment type="tissue specificity">
    <text evidence="2 3">Expressed in stems, flowers, cauline leaves and rosettes.</text>
</comment>
<comment type="induction">
    <text evidence="2 3">Induced by drought, high salinity and abscisic acid (ABA). Slightly up-regulated by jasmonic acid. Not induced by cold treatment.</text>
</comment>
<comment type="domain">
    <text>The NAC domain includes a DNA-binding domain and a dimerization domain.</text>
</comment>
<dbReference type="EMBL" id="AC019018">
    <property type="protein sequence ID" value="AAG52283.1"/>
    <property type="molecule type" value="Genomic_DNA"/>
</dbReference>
<dbReference type="EMBL" id="CP002684">
    <property type="protein sequence ID" value="AEE32864.1"/>
    <property type="molecule type" value="Genomic_DNA"/>
</dbReference>
<dbReference type="EMBL" id="AY065268">
    <property type="protein sequence ID" value="AAL38744.1"/>
    <property type="molecule type" value="mRNA"/>
</dbReference>
<dbReference type="EMBL" id="AY117224">
    <property type="protein sequence ID" value="AAM51299.1"/>
    <property type="molecule type" value="mRNA"/>
</dbReference>
<dbReference type="PIR" id="B96570">
    <property type="entry name" value="B96570"/>
</dbReference>
<dbReference type="RefSeq" id="NP_175697.1">
    <property type="nucleotide sequence ID" value="NM_104167.6"/>
</dbReference>
<dbReference type="PDB" id="1UT4">
    <property type="method" value="X-ray"/>
    <property type="resolution" value="2.50 A"/>
    <property type="chains" value="A/B=1-168"/>
</dbReference>
<dbReference type="PDB" id="1UT7">
    <property type="method" value="X-ray"/>
    <property type="resolution" value="1.90 A"/>
    <property type="chains" value="A/B=1-168"/>
</dbReference>
<dbReference type="PDB" id="3SWM">
    <property type="method" value="X-ray"/>
    <property type="resolution" value="4.25 A"/>
    <property type="chains" value="A/B/C/D=1-168"/>
</dbReference>
<dbReference type="PDB" id="3SWP">
    <property type="method" value="X-ray"/>
    <property type="resolution" value="4.11 A"/>
    <property type="chains" value="A/B/C/D=1-168"/>
</dbReference>
<dbReference type="PDB" id="4DUL">
    <property type="method" value="X-ray"/>
    <property type="resolution" value="3.00 A"/>
    <property type="chains" value="A/B=1-168"/>
</dbReference>
<dbReference type="PDBsum" id="1UT4"/>
<dbReference type="PDBsum" id="1UT7"/>
<dbReference type="PDBsum" id="3SWM"/>
<dbReference type="PDBsum" id="3SWP"/>
<dbReference type="PDBsum" id="4DUL"/>
<dbReference type="SMR" id="Q9C932"/>
<dbReference type="BioGRID" id="26947">
    <property type="interactions" value="18"/>
</dbReference>
<dbReference type="FunCoup" id="Q9C932">
    <property type="interactions" value="1"/>
</dbReference>
<dbReference type="IntAct" id="Q9C932">
    <property type="interactions" value="6"/>
</dbReference>
<dbReference type="STRING" id="3702.Q9C932"/>
<dbReference type="PaxDb" id="3702-AT1G52890.1"/>
<dbReference type="ProteomicsDB" id="251032"/>
<dbReference type="DNASU" id="841722"/>
<dbReference type="EnsemblPlants" id="AT1G52890.1">
    <property type="protein sequence ID" value="AT1G52890.1"/>
    <property type="gene ID" value="AT1G52890"/>
</dbReference>
<dbReference type="GeneID" id="841722"/>
<dbReference type="Gramene" id="AT1G52890.1">
    <property type="protein sequence ID" value="AT1G52890.1"/>
    <property type="gene ID" value="AT1G52890"/>
</dbReference>
<dbReference type="KEGG" id="ath:AT1G52890"/>
<dbReference type="Araport" id="AT1G52890"/>
<dbReference type="TAIR" id="AT1G52890">
    <property type="gene designation" value="NAC019"/>
</dbReference>
<dbReference type="eggNOG" id="ENOG502QRBC">
    <property type="taxonomic scope" value="Eukaryota"/>
</dbReference>
<dbReference type="HOGENOM" id="CLU_035664_8_4_1"/>
<dbReference type="InParanoid" id="Q9C932"/>
<dbReference type="OMA" id="VPNLEYN"/>
<dbReference type="PhylomeDB" id="Q9C932"/>
<dbReference type="EvolutionaryTrace" id="Q9C932"/>
<dbReference type="PRO" id="PR:Q9C932"/>
<dbReference type="Proteomes" id="UP000006548">
    <property type="component" value="Chromosome 1"/>
</dbReference>
<dbReference type="ExpressionAtlas" id="Q9C932">
    <property type="expression patterns" value="baseline and differential"/>
</dbReference>
<dbReference type="GO" id="GO:0005634">
    <property type="term" value="C:nucleus"/>
    <property type="evidence" value="ECO:0007669"/>
    <property type="project" value="UniProtKB-SubCell"/>
</dbReference>
<dbReference type="GO" id="GO:0003677">
    <property type="term" value="F:DNA binding"/>
    <property type="evidence" value="ECO:0007669"/>
    <property type="project" value="UniProtKB-KW"/>
</dbReference>
<dbReference type="GO" id="GO:0003700">
    <property type="term" value="F:DNA-binding transcription factor activity"/>
    <property type="evidence" value="ECO:0000314"/>
    <property type="project" value="TAIR"/>
</dbReference>
<dbReference type="GO" id="GO:0009414">
    <property type="term" value="P:response to water deprivation"/>
    <property type="evidence" value="ECO:0000315"/>
    <property type="project" value="TAIR"/>
</dbReference>
<dbReference type="FunFam" id="2.170.150.80:FF:000008">
    <property type="entry name" value="NAC domain-containing protein 72-like"/>
    <property type="match status" value="1"/>
</dbReference>
<dbReference type="Gene3D" id="2.170.150.80">
    <property type="entry name" value="NAC domain"/>
    <property type="match status" value="1"/>
</dbReference>
<dbReference type="InterPro" id="IPR003441">
    <property type="entry name" value="NAC-dom"/>
</dbReference>
<dbReference type="InterPro" id="IPR036093">
    <property type="entry name" value="NAC_dom_sf"/>
</dbReference>
<dbReference type="PANTHER" id="PTHR31744:SF233">
    <property type="entry name" value="NAC DOMAIN-CONTAINING PROTEIN 72-LIKE"/>
    <property type="match status" value="1"/>
</dbReference>
<dbReference type="PANTHER" id="PTHR31744">
    <property type="entry name" value="PROTEIN CUP-SHAPED COTYLEDON 2-RELATED"/>
    <property type="match status" value="1"/>
</dbReference>
<dbReference type="Pfam" id="PF02365">
    <property type="entry name" value="NAM"/>
    <property type="match status" value="1"/>
</dbReference>
<dbReference type="SUPFAM" id="SSF101941">
    <property type="entry name" value="NAC domain"/>
    <property type="match status" value="1"/>
</dbReference>
<dbReference type="PROSITE" id="PS51005">
    <property type="entry name" value="NAC"/>
    <property type="match status" value="1"/>
</dbReference>
<evidence type="ECO:0000255" key="1">
    <source>
        <dbReference type="PROSITE-ProRule" id="PRU00353"/>
    </source>
</evidence>
<evidence type="ECO:0000269" key="2">
    <source>
    </source>
</evidence>
<evidence type="ECO:0000269" key="3">
    <source>
    </source>
</evidence>
<evidence type="ECO:0007829" key="4">
    <source>
        <dbReference type="PDB" id="1UT4"/>
    </source>
</evidence>
<evidence type="ECO:0007829" key="5">
    <source>
        <dbReference type="PDB" id="1UT7"/>
    </source>
</evidence>
<proteinExistence type="evidence at protein level"/>
<name>NAC19_ARATH</name>
<sequence length="317" mass="35815">MGIQETDPLTQLSLPPGFRFYPTDEELMVQYLCRKAAGYDFSLQLIAEIDLYKFDPWVLPNKALFGEKEWYFFSPRDRKYPNGSRPNRVAGSGYWKATGTDKIISTEGQRVGIKKALVFYIGKAPKGTKTNWIMHEYRLIEPSRRNGSTKLDDWVLCRIYKKQSSAQKQVYDNGIANAREFSNNGTSSTTSSSSHFEDVLDSFHQEIDNRNFQFSNPNRISSLRPDLTEQKTGFHGLADTSNFDWASFAGNVEHNNSVPELGMSHVVPNLEYNCGYLKTEEEVESSHGFNNSGELAQKGYGVDSFGYSGQVGGFGFM</sequence>
<gene>
    <name type="primary">NAC019</name>
    <name type="synonym">ANAC</name>
    <name type="ordered locus">At1g52890</name>
    <name type="ORF">F14G24.16</name>
</gene>
<accession>Q9C932</accession>
<feature type="chain" id="PRO_0000132309" description="NAC domain-containing protein 19">
    <location>
        <begin position="1"/>
        <end position="317"/>
    </location>
</feature>
<feature type="domain" description="NAC" evidence="1">
    <location>
        <begin position="14"/>
        <end position="162"/>
    </location>
</feature>
<feature type="helix" evidence="4">
    <location>
        <begin position="10"/>
        <end position="12"/>
    </location>
</feature>
<feature type="strand" evidence="5">
    <location>
        <begin position="18"/>
        <end position="20"/>
    </location>
</feature>
<feature type="helix" evidence="5">
    <location>
        <begin position="24"/>
        <end position="30"/>
    </location>
</feature>
<feature type="helix" evidence="5">
    <location>
        <begin position="32"/>
        <end position="36"/>
    </location>
</feature>
<feature type="strand" evidence="5">
    <location>
        <begin position="46"/>
        <end position="48"/>
    </location>
</feature>
<feature type="helix" evidence="5">
    <location>
        <begin position="51"/>
        <end position="53"/>
    </location>
</feature>
<feature type="helix" evidence="5">
    <location>
        <begin position="56"/>
        <end position="58"/>
    </location>
</feature>
<feature type="helix" evidence="5">
    <location>
        <begin position="59"/>
        <end position="62"/>
    </location>
</feature>
<feature type="strand" evidence="5">
    <location>
        <begin position="63"/>
        <end position="65"/>
    </location>
</feature>
<feature type="strand" evidence="5">
    <location>
        <begin position="67"/>
        <end position="75"/>
    </location>
</feature>
<feature type="strand" evidence="5">
    <location>
        <begin position="88"/>
        <end position="90"/>
    </location>
</feature>
<feature type="strand" evidence="5">
    <location>
        <begin position="93"/>
        <end position="106"/>
    </location>
</feature>
<feature type="strand" evidence="5">
    <location>
        <begin position="109"/>
        <end position="123"/>
    </location>
</feature>
<feature type="strand" evidence="5">
    <location>
        <begin position="128"/>
        <end position="139"/>
    </location>
</feature>
<feature type="strand" evidence="5">
    <location>
        <begin position="154"/>
        <end position="161"/>
    </location>
</feature>
<organism>
    <name type="scientific">Arabidopsis thaliana</name>
    <name type="common">Mouse-ear cress</name>
    <dbReference type="NCBI Taxonomy" id="3702"/>
    <lineage>
        <taxon>Eukaryota</taxon>
        <taxon>Viridiplantae</taxon>
        <taxon>Streptophyta</taxon>
        <taxon>Embryophyta</taxon>
        <taxon>Tracheophyta</taxon>
        <taxon>Spermatophyta</taxon>
        <taxon>Magnoliopsida</taxon>
        <taxon>eudicotyledons</taxon>
        <taxon>Gunneridae</taxon>
        <taxon>Pentapetalae</taxon>
        <taxon>rosids</taxon>
        <taxon>malvids</taxon>
        <taxon>Brassicales</taxon>
        <taxon>Brassicaceae</taxon>
        <taxon>Camelineae</taxon>
        <taxon>Arabidopsis</taxon>
    </lineage>
</organism>
<reference key="1">
    <citation type="journal article" date="2003" name="Biochem. J.">
        <title>Interactions between plant RING-H2 and plant-specific NAC (NAM/ATAF1/2/CUC2) proteins: RING-H2 molecular specificity and cellular localization.</title>
        <authorList>
            <person name="Greve K."/>
            <person name="La Cour T."/>
            <person name="Jensen M.K."/>
            <person name="Poulsen F.M."/>
            <person name="Skriver K."/>
        </authorList>
    </citation>
    <scope>NUCLEOTIDE SEQUENCE [MRNA]</scope>
    <scope>TISSUE SPECIFICITY</scope>
    <scope>SUBCELLULAR LOCATION</scope>
    <scope>INDUCTION</scope>
    <scope>INTERACTION WITH RHA2A; RHA2B; RHA3A; RHA3B AND RHG1A</scope>
</reference>
<reference key="2">
    <citation type="journal article" date="2000" name="Nature">
        <title>Sequence and analysis of chromosome 1 of the plant Arabidopsis thaliana.</title>
        <authorList>
            <person name="Theologis A."/>
            <person name="Ecker J.R."/>
            <person name="Palm C.J."/>
            <person name="Federspiel N.A."/>
            <person name="Kaul S."/>
            <person name="White O."/>
            <person name="Alonso J."/>
            <person name="Altafi H."/>
            <person name="Araujo R."/>
            <person name="Bowman C.L."/>
            <person name="Brooks S.Y."/>
            <person name="Buehler E."/>
            <person name="Chan A."/>
            <person name="Chao Q."/>
            <person name="Chen H."/>
            <person name="Cheuk R.F."/>
            <person name="Chin C.W."/>
            <person name="Chung M.K."/>
            <person name="Conn L."/>
            <person name="Conway A.B."/>
            <person name="Conway A.R."/>
            <person name="Creasy T.H."/>
            <person name="Dewar K."/>
            <person name="Dunn P."/>
            <person name="Etgu P."/>
            <person name="Feldblyum T.V."/>
            <person name="Feng J.-D."/>
            <person name="Fong B."/>
            <person name="Fujii C.Y."/>
            <person name="Gill J.E."/>
            <person name="Goldsmith A.D."/>
            <person name="Haas B."/>
            <person name="Hansen N.F."/>
            <person name="Hughes B."/>
            <person name="Huizar L."/>
            <person name="Hunter J.L."/>
            <person name="Jenkins J."/>
            <person name="Johnson-Hopson C."/>
            <person name="Khan S."/>
            <person name="Khaykin E."/>
            <person name="Kim C.J."/>
            <person name="Koo H.L."/>
            <person name="Kremenetskaia I."/>
            <person name="Kurtz D.B."/>
            <person name="Kwan A."/>
            <person name="Lam B."/>
            <person name="Langin-Hooper S."/>
            <person name="Lee A."/>
            <person name="Lee J.M."/>
            <person name="Lenz C.A."/>
            <person name="Li J.H."/>
            <person name="Li Y.-P."/>
            <person name="Lin X."/>
            <person name="Liu S.X."/>
            <person name="Liu Z.A."/>
            <person name="Luros J.S."/>
            <person name="Maiti R."/>
            <person name="Marziali A."/>
            <person name="Militscher J."/>
            <person name="Miranda M."/>
            <person name="Nguyen M."/>
            <person name="Nierman W.C."/>
            <person name="Osborne B.I."/>
            <person name="Pai G."/>
            <person name="Peterson J."/>
            <person name="Pham P.K."/>
            <person name="Rizzo M."/>
            <person name="Rooney T."/>
            <person name="Rowley D."/>
            <person name="Sakano H."/>
            <person name="Salzberg S.L."/>
            <person name="Schwartz J.R."/>
            <person name="Shinn P."/>
            <person name="Southwick A.M."/>
            <person name="Sun H."/>
            <person name="Tallon L.J."/>
            <person name="Tambunga G."/>
            <person name="Toriumi M.J."/>
            <person name="Town C.D."/>
            <person name="Utterback T."/>
            <person name="Van Aken S."/>
            <person name="Vaysberg M."/>
            <person name="Vysotskaia V.S."/>
            <person name="Walker M."/>
            <person name="Wu D."/>
            <person name="Yu G."/>
            <person name="Fraser C.M."/>
            <person name="Venter J.C."/>
            <person name="Davis R.W."/>
        </authorList>
    </citation>
    <scope>NUCLEOTIDE SEQUENCE [LARGE SCALE GENOMIC DNA]</scope>
    <source>
        <strain>cv. Columbia</strain>
    </source>
</reference>
<reference key="3">
    <citation type="journal article" date="2017" name="Plant J.">
        <title>Araport11: a complete reannotation of the Arabidopsis thaliana reference genome.</title>
        <authorList>
            <person name="Cheng C.Y."/>
            <person name="Krishnakumar V."/>
            <person name="Chan A.P."/>
            <person name="Thibaud-Nissen F."/>
            <person name="Schobel S."/>
            <person name="Town C.D."/>
        </authorList>
    </citation>
    <scope>GENOME REANNOTATION</scope>
    <source>
        <strain>cv. Columbia</strain>
    </source>
</reference>
<reference key="4">
    <citation type="journal article" date="2003" name="Science">
        <title>Empirical analysis of transcriptional activity in the Arabidopsis genome.</title>
        <authorList>
            <person name="Yamada K."/>
            <person name="Lim J."/>
            <person name="Dale J.M."/>
            <person name="Chen H."/>
            <person name="Shinn P."/>
            <person name="Palm C.J."/>
            <person name="Southwick A.M."/>
            <person name="Wu H.C."/>
            <person name="Kim C.J."/>
            <person name="Nguyen M."/>
            <person name="Pham P.K."/>
            <person name="Cheuk R.F."/>
            <person name="Karlin-Newmann G."/>
            <person name="Liu S.X."/>
            <person name="Lam B."/>
            <person name="Sakano H."/>
            <person name="Wu T."/>
            <person name="Yu G."/>
            <person name="Miranda M."/>
            <person name="Quach H.L."/>
            <person name="Tripp M."/>
            <person name="Chang C.H."/>
            <person name="Lee J.M."/>
            <person name="Toriumi M.J."/>
            <person name="Chan M.M."/>
            <person name="Tang C.C."/>
            <person name="Onodera C.S."/>
            <person name="Deng J.M."/>
            <person name="Akiyama K."/>
            <person name="Ansari Y."/>
            <person name="Arakawa T."/>
            <person name="Banh J."/>
            <person name="Banno F."/>
            <person name="Bowser L."/>
            <person name="Brooks S.Y."/>
            <person name="Carninci P."/>
            <person name="Chao Q."/>
            <person name="Choy N."/>
            <person name="Enju A."/>
            <person name="Goldsmith A.D."/>
            <person name="Gurjal M."/>
            <person name="Hansen N.F."/>
            <person name="Hayashizaki Y."/>
            <person name="Johnson-Hopson C."/>
            <person name="Hsuan V.W."/>
            <person name="Iida K."/>
            <person name="Karnes M."/>
            <person name="Khan S."/>
            <person name="Koesema E."/>
            <person name="Ishida J."/>
            <person name="Jiang P.X."/>
            <person name="Jones T."/>
            <person name="Kawai J."/>
            <person name="Kamiya A."/>
            <person name="Meyers C."/>
            <person name="Nakajima M."/>
            <person name="Narusaka M."/>
            <person name="Seki M."/>
            <person name="Sakurai T."/>
            <person name="Satou M."/>
            <person name="Tamse R."/>
            <person name="Vaysberg M."/>
            <person name="Wallender E.K."/>
            <person name="Wong C."/>
            <person name="Yamamura Y."/>
            <person name="Yuan S."/>
            <person name="Shinozaki K."/>
            <person name="Davis R.W."/>
            <person name="Theologis A."/>
            <person name="Ecker J.R."/>
        </authorList>
    </citation>
    <scope>NUCLEOTIDE SEQUENCE [LARGE SCALE MRNA]</scope>
    <source>
        <strain>cv. Columbia</strain>
    </source>
</reference>
<reference key="5">
    <citation type="journal article" date="2003" name="DNA Res.">
        <title>Comprehensive analysis of NAC family genes in Oryza sativa and Arabidopsis thaliana.</title>
        <authorList>
            <person name="Ooka H."/>
            <person name="Satoh K."/>
            <person name="Doi K."/>
            <person name="Nagata T."/>
            <person name="Otomo Y."/>
            <person name="Murakami K."/>
            <person name="Matsubara K."/>
            <person name="Osato N."/>
            <person name="Kawai J."/>
            <person name="Carninci P."/>
            <person name="Hayashizaki Y."/>
            <person name="Suzuki K."/>
            <person name="Kojima K."/>
            <person name="Takahara Y."/>
            <person name="Yamamoto K."/>
            <person name="Kikuchi S."/>
        </authorList>
    </citation>
    <scope>GENE FAMILY</scope>
    <scope>NOMENCLATURE</scope>
</reference>
<reference key="6">
    <citation type="journal article" date="2004" name="Plant Cell">
        <title>Isolation and functional analysis of Arabidopsis stress-inducible NAC transcription factors that bind to a drought-responsive cis-element in the early responsive to dehydration stress 1 promoter.</title>
        <authorList>
            <person name="Tran L.-S.H."/>
            <person name="Nakashima K."/>
            <person name="Sakuma Y."/>
            <person name="Simpson S.D."/>
            <person name="Fujita Y."/>
            <person name="Maruyama K."/>
            <person name="Fujita M."/>
            <person name="Seki M."/>
            <person name="Shinozaki K."/>
            <person name="Yamaguchi-Shinozaki K."/>
        </authorList>
    </citation>
    <scope>FUNCTION</scope>
    <scope>TISSUE SPECIFICITY</scope>
    <scope>INDUCTION</scope>
</reference>
<reference key="7">
    <citation type="journal article" date="2004" name="EMBO Rep.">
        <title>Structure of the conserved domain of ANAC, a member of the NAC family of transcription factors.</title>
        <authorList>
            <person name="Ernst H.A."/>
            <person name="Olsen A.N."/>
            <person name="Larsen S."/>
            <person name="Lo Leggio L."/>
        </authorList>
    </citation>
    <scope>X-RAY CRYSTALLOGRAPHY (1.9 ANGSTROMS) OF 1-163</scope>
</reference>
<protein>
    <recommendedName>
        <fullName>NAC domain-containing protein 19</fullName>
        <shortName>ANAC019</shortName>
    </recommendedName>
    <alternativeName>
        <fullName>Abscisic-acid-responsive NAC</fullName>
        <shortName>ANAC</shortName>
    </alternativeName>
</protein>